<reference evidence="7" key="1">
    <citation type="journal article" date="1998" name="Science">
        <title>Genome sequence of the nematode C. elegans: a platform for investigating biology.</title>
        <authorList>
            <consortium name="The C. elegans sequencing consortium"/>
        </authorList>
    </citation>
    <scope>NUCLEOTIDE SEQUENCE [LARGE SCALE GENOMIC DNA]</scope>
    <source>
        <strain evidence="7">Bristol N2</strain>
    </source>
</reference>
<reference evidence="6" key="2">
    <citation type="journal article" date="2000" name="Development">
        <title>Evolutionary conservation of redundancy between a diverged pair of forkhead transcription factor homologues.</title>
        <authorList>
            <person name="Molin L."/>
            <person name="Mounsey A."/>
            <person name="Aslam S."/>
            <person name="Bauer P."/>
            <person name="Young J."/>
            <person name="James M."/>
            <person name="Sharma-Oates A."/>
            <person name="Hope I.A."/>
        </authorList>
    </citation>
    <scope>FUNCTION</scope>
    <scope>SUBCELLULAR LOCATION</scope>
    <scope>DEVELOPMENTAL STAGE</scope>
    <scope>DISRUPTION PHENOTYPE</scope>
</reference>
<accession>Q22510</accession>
<accession>Q95QA9</accession>
<evidence type="ECO:0000250" key="1">
    <source>
        <dbReference type="UniProtKB" id="Q12952"/>
    </source>
</evidence>
<evidence type="ECO:0000255" key="2">
    <source>
        <dbReference type="PROSITE-ProRule" id="PRU00089"/>
    </source>
</evidence>
<evidence type="ECO:0000256" key="3">
    <source>
        <dbReference type="SAM" id="MobiDB-lite"/>
    </source>
</evidence>
<evidence type="ECO:0000269" key="4">
    <source>
    </source>
</evidence>
<evidence type="ECO:0000303" key="5">
    <source>
    </source>
</evidence>
<evidence type="ECO:0000305" key="6"/>
<evidence type="ECO:0000312" key="7">
    <source>
        <dbReference type="Proteomes" id="UP000001940"/>
    </source>
</evidence>
<evidence type="ECO:0000312" key="8">
    <source>
        <dbReference type="WormBase" id="T14G12.4a"/>
    </source>
</evidence>
<evidence type="ECO:0000312" key="9">
    <source>
        <dbReference type="WormBase" id="T14G12.4b"/>
    </source>
</evidence>
<keyword id="KW-0025">Alternative splicing</keyword>
<keyword id="KW-0238">DNA-binding</keyword>
<keyword id="KW-0539">Nucleus</keyword>
<keyword id="KW-1185">Reference proteome</keyword>
<keyword id="KW-0804">Transcription</keyword>
<keyword id="KW-0805">Transcription regulation</keyword>
<sequence length="270" mass="30491">MARFSILDLCPDLVEEAVKIEQLHISTQPCIKQESTDISDPSTSIDTTDTMSTDYLHDESIDDERSESTLSKDSKSPSSSNSEEKTPSSPNDKPPFSYNALIMMAIKDSPEKRLTLAGIYEYIVTNYPFYRDNKQGWQNSIRHNLSLNKCFVKVPRNFDDPGKGNYWMLDATAEDEVFIGGATGKLRRRPSSLSRARMDAYKQYGAAAANLFPYFSPGMPALPRHPYLTAPNGFLPRQMMPIPAMPQVFAQPELLQLYINQQQSLFTKLQ</sequence>
<organism evidence="7">
    <name type="scientific">Caenorhabditis elegans</name>
    <dbReference type="NCBI Taxonomy" id="6239"/>
    <lineage>
        <taxon>Eukaryota</taxon>
        <taxon>Metazoa</taxon>
        <taxon>Ecdysozoa</taxon>
        <taxon>Nematoda</taxon>
        <taxon>Chromadorea</taxon>
        <taxon>Rhabditida</taxon>
        <taxon>Rhabditina</taxon>
        <taxon>Rhabditomorpha</taxon>
        <taxon>Rhabditoidea</taxon>
        <taxon>Rhabditidae</taxon>
        <taxon>Peloderinae</taxon>
        <taxon>Caenorhabditis</taxon>
    </lineage>
</organism>
<dbReference type="EMBL" id="BX284606">
    <property type="protein sequence ID" value="CCD62370.1"/>
    <property type="molecule type" value="Genomic_DNA"/>
</dbReference>
<dbReference type="EMBL" id="BX284606">
    <property type="protein sequence ID" value="CCD62371.1"/>
    <property type="molecule type" value="Genomic_DNA"/>
</dbReference>
<dbReference type="PIR" id="T16880">
    <property type="entry name" value="T16880"/>
</dbReference>
<dbReference type="RefSeq" id="NP_001379595.1">
    <molecule id="Q22510-2"/>
    <property type="nucleotide sequence ID" value="NM_001392750.1"/>
</dbReference>
<dbReference type="RefSeq" id="NP_508644.1">
    <molecule id="Q22510-1"/>
    <property type="nucleotide sequence ID" value="NM_076243.9"/>
</dbReference>
<dbReference type="RefSeq" id="NP_508645.1">
    <property type="nucleotide sequence ID" value="NM_076244.3"/>
</dbReference>
<dbReference type="SMR" id="Q22510"/>
<dbReference type="DIP" id="DIP-25543N"/>
<dbReference type="FunCoup" id="Q22510">
    <property type="interactions" value="173"/>
</dbReference>
<dbReference type="IntAct" id="Q22510">
    <property type="interactions" value="5"/>
</dbReference>
<dbReference type="STRING" id="6239.T14G12.4a.1"/>
<dbReference type="PaxDb" id="6239-T14G12.4a"/>
<dbReference type="EnsemblMetazoa" id="T14G12.4a.1">
    <molecule id="Q22510-1"/>
    <property type="protein sequence ID" value="T14G12.4a.1"/>
    <property type="gene ID" value="WBGene00001434"/>
</dbReference>
<dbReference type="EnsemblMetazoa" id="T14G12.4b.1">
    <molecule id="Q22510-2"/>
    <property type="protein sequence ID" value="T14G12.4b.1"/>
    <property type="gene ID" value="WBGene00001434"/>
</dbReference>
<dbReference type="GeneID" id="180663"/>
<dbReference type="KEGG" id="cel:CELE_T14G12.4"/>
<dbReference type="UCSC" id="T14G12.4a">
    <property type="organism name" value="c. elegans"/>
</dbReference>
<dbReference type="AGR" id="WB:WBGene00001434"/>
<dbReference type="CTD" id="180663"/>
<dbReference type="WormBase" id="T14G12.4a">
    <molecule id="Q22510-1"/>
    <property type="protein sequence ID" value="CE04965"/>
    <property type="gene ID" value="WBGene00001434"/>
    <property type="gene designation" value="fkh-2"/>
</dbReference>
<dbReference type="WormBase" id="T14G12.4b">
    <molecule id="Q22510-2"/>
    <property type="protein sequence ID" value="CE29342"/>
    <property type="gene ID" value="WBGene00001434"/>
    <property type="gene designation" value="fkh-2"/>
</dbReference>
<dbReference type="eggNOG" id="KOG2294">
    <property type="taxonomic scope" value="Eukaryota"/>
</dbReference>
<dbReference type="GeneTree" id="ENSGT00940000165356"/>
<dbReference type="HOGENOM" id="CLU_1070538_0_0_1"/>
<dbReference type="InParanoid" id="Q22510"/>
<dbReference type="OMA" id="IMMAIKN"/>
<dbReference type="OrthoDB" id="6230630at2759"/>
<dbReference type="PhylomeDB" id="Q22510"/>
<dbReference type="Reactome" id="R-CEL-3232118">
    <property type="pathway name" value="SUMOylation of transcription factors"/>
</dbReference>
<dbReference type="PRO" id="PR:Q22510"/>
<dbReference type="Proteomes" id="UP000001940">
    <property type="component" value="Chromosome X"/>
</dbReference>
<dbReference type="Bgee" id="WBGene00001434">
    <property type="expression patterns" value="Expressed in pharyngeal muscle cell (C elegans) and 3 other cell types or tissues"/>
</dbReference>
<dbReference type="ExpressionAtlas" id="Q22510">
    <property type="expression patterns" value="baseline and differential"/>
</dbReference>
<dbReference type="GO" id="GO:0005634">
    <property type="term" value="C:nucleus"/>
    <property type="evidence" value="ECO:0000314"/>
    <property type="project" value="WormBase"/>
</dbReference>
<dbReference type="GO" id="GO:0003700">
    <property type="term" value="F:DNA-binding transcription factor activity"/>
    <property type="evidence" value="ECO:0000315"/>
    <property type="project" value="WormBase"/>
</dbReference>
<dbReference type="GO" id="GO:0000981">
    <property type="term" value="F:DNA-binding transcription factor activity, RNA polymerase II-specific"/>
    <property type="evidence" value="ECO:0000318"/>
    <property type="project" value="GO_Central"/>
</dbReference>
<dbReference type="GO" id="GO:0000978">
    <property type="term" value="F:RNA polymerase II cis-regulatory region sequence-specific DNA binding"/>
    <property type="evidence" value="ECO:0000318"/>
    <property type="project" value="GO_Central"/>
</dbReference>
<dbReference type="GO" id="GO:0009653">
    <property type="term" value="P:anatomical structure morphogenesis"/>
    <property type="evidence" value="ECO:0000318"/>
    <property type="project" value="GO_Central"/>
</dbReference>
<dbReference type="GO" id="GO:0030154">
    <property type="term" value="P:cell differentiation"/>
    <property type="evidence" value="ECO:0000318"/>
    <property type="project" value="GO_Central"/>
</dbReference>
<dbReference type="GO" id="GO:0016358">
    <property type="term" value="P:dendrite development"/>
    <property type="evidence" value="ECO:0000315"/>
    <property type="project" value="WormBase"/>
</dbReference>
<dbReference type="GO" id="GO:0009792">
    <property type="term" value="P:embryo development ending in birth or egg hatching"/>
    <property type="evidence" value="ECO:0000316"/>
    <property type="project" value="WormBase"/>
</dbReference>
<dbReference type="GO" id="GO:0002119">
    <property type="term" value="P:nematode larval development"/>
    <property type="evidence" value="ECO:0000316"/>
    <property type="project" value="WormBase"/>
</dbReference>
<dbReference type="GO" id="GO:0048665">
    <property type="term" value="P:neuron fate specification"/>
    <property type="evidence" value="ECO:0000315"/>
    <property type="project" value="WormBase"/>
</dbReference>
<dbReference type="GO" id="GO:1905515">
    <property type="term" value="P:non-motile cilium assembly"/>
    <property type="evidence" value="ECO:0000315"/>
    <property type="project" value="WormBase"/>
</dbReference>
<dbReference type="GO" id="GO:0045944">
    <property type="term" value="P:positive regulation of transcription by RNA polymerase II"/>
    <property type="evidence" value="ECO:0000315"/>
    <property type="project" value="WormBase"/>
</dbReference>
<dbReference type="GO" id="GO:0006357">
    <property type="term" value="P:regulation of transcription by RNA polymerase II"/>
    <property type="evidence" value="ECO:0000318"/>
    <property type="project" value="GO_Central"/>
</dbReference>
<dbReference type="CDD" id="cd20021">
    <property type="entry name" value="FH_FOXG"/>
    <property type="match status" value="1"/>
</dbReference>
<dbReference type="FunFam" id="1.10.10.10:FF:000135">
    <property type="entry name" value="forkhead box protein G1"/>
    <property type="match status" value="1"/>
</dbReference>
<dbReference type="Gene3D" id="1.10.10.10">
    <property type="entry name" value="Winged helix-like DNA-binding domain superfamily/Winged helix DNA-binding domain"/>
    <property type="match status" value="1"/>
</dbReference>
<dbReference type="InterPro" id="IPR001766">
    <property type="entry name" value="Fork_head_dom"/>
</dbReference>
<dbReference type="InterPro" id="IPR047208">
    <property type="entry name" value="FOXG1"/>
</dbReference>
<dbReference type="InterPro" id="IPR018122">
    <property type="entry name" value="TF_fork_head_CS_1"/>
</dbReference>
<dbReference type="InterPro" id="IPR030456">
    <property type="entry name" value="TF_fork_head_CS_2"/>
</dbReference>
<dbReference type="InterPro" id="IPR036388">
    <property type="entry name" value="WH-like_DNA-bd_sf"/>
</dbReference>
<dbReference type="InterPro" id="IPR036390">
    <property type="entry name" value="WH_DNA-bd_sf"/>
</dbReference>
<dbReference type="PANTHER" id="PTHR46617">
    <property type="entry name" value="FORKHEAD BOX PROTEIN G1"/>
    <property type="match status" value="1"/>
</dbReference>
<dbReference type="PANTHER" id="PTHR46617:SF3">
    <property type="entry name" value="FORKHEAD BOX PROTEIN G1"/>
    <property type="match status" value="1"/>
</dbReference>
<dbReference type="Pfam" id="PF00250">
    <property type="entry name" value="Forkhead"/>
    <property type="match status" value="1"/>
</dbReference>
<dbReference type="PRINTS" id="PR00053">
    <property type="entry name" value="FORKHEAD"/>
</dbReference>
<dbReference type="SMART" id="SM00339">
    <property type="entry name" value="FH"/>
    <property type="match status" value="1"/>
</dbReference>
<dbReference type="SUPFAM" id="SSF46785">
    <property type="entry name" value="Winged helix' DNA-binding domain"/>
    <property type="match status" value="1"/>
</dbReference>
<dbReference type="PROSITE" id="PS00657">
    <property type="entry name" value="FORK_HEAD_1"/>
    <property type="match status" value="1"/>
</dbReference>
<dbReference type="PROSITE" id="PS00658">
    <property type="entry name" value="FORK_HEAD_2"/>
    <property type="match status" value="1"/>
</dbReference>
<dbReference type="PROSITE" id="PS50039">
    <property type="entry name" value="FORK_HEAD_3"/>
    <property type="match status" value="1"/>
</dbReference>
<gene>
    <name evidence="8" type="primary">fkh-2</name>
    <name evidence="5 8" type="ORF">T14G12.4</name>
</gene>
<name>FKH02_CAEEL</name>
<proteinExistence type="evidence at transcript level"/>
<protein>
    <recommendedName>
        <fullName evidence="6">Forkhead box protein fkh-2</fullName>
    </recommendedName>
    <alternativeName>
        <fullName evidence="5 8">Forkhead transcription factor family member fkh-2</fullName>
    </alternativeName>
</protein>
<comment type="function">
    <text evidence="1 4">Transcription factor (By similarity). Plays a role in embryogenesis and later development, perhaps acting redundantly with forkhead protein pes-1 (PubMed:11044397).</text>
</comment>
<comment type="subcellular location">
    <subcellularLocation>
        <location evidence="2 4">Nucleus</location>
    </subcellularLocation>
</comment>
<comment type="alternative products">
    <event type="alternative splicing"/>
    <isoform>
        <id>Q22510-1</id>
        <name evidence="8">a</name>
        <sequence type="displayed"/>
    </isoform>
    <isoform>
        <id>Q22510-2</id>
        <name evidence="9">b</name>
        <sequence type="described" ref="VSP_061479"/>
    </isoform>
</comment>
<comment type="developmental stage">
    <text evidence="4">Expressed in the 4 descendants of the D blastomere in embryos at about the 185 cells stage and in many other unidentified cells located more anteriorly.</text>
</comment>
<comment type="disruption phenotype">
    <text evidence="4">RNAi-mediated knockdown by injection into adults causes slow and spatially restricted movement of about 30% of their L1 larval progeny, which nonetheless grow normally and do not display any obvious phenotype as late larvae or adults (PubMed:11044397). However, simultaneous knockdown of forkhead gene pes-1 causes 12% of eggs produced by hermaphrodites to arrest development at late stages of embryogenesis and 81% arrest after hatching as L1 stage larvae (PubMed:11044397).</text>
</comment>
<feature type="chain" id="PRO_0000455283" description="Forkhead box protein fkh-2">
    <location>
        <begin position="1"/>
        <end position="270"/>
    </location>
</feature>
<feature type="DNA-binding region" description="Fork-head" evidence="2">
    <location>
        <begin position="93"/>
        <end position="188"/>
    </location>
</feature>
<feature type="region of interest" description="Disordered" evidence="3">
    <location>
        <begin position="32"/>
        <end position="94"/>
    </location>
</feature>
<feature type="compositionally biased region" description="Low complexity" evidence="3">
    <location>
        <begin position="36"/>
        <end position="54"/>
    </location>
</feature>
<feature type="compositionally biased region" description="Basic and acidic residues" evidence="3">
    <location>
        <begin position="66"/>
        <end position="75"/>
    </location>
</feature>
<feature type="compositionally biased region" description="Low complexity" evidence="3">
    <location>
        <begin position="76"/>
        <end position="91"/>
    </location>
</feature>
<feature type="splice variant" id="VSP_061479" description="In isoform b." evidence="6">
    <location>
        <begin position="1"/>
        <end position="102"/>
    </location>
</feature>